<accession>Q7A882</accession>
<keyword id="KW-0238">DNA-binding</keyword>
<keyword id="KW-0677">Repeat</keyword>
<keyword id="KW-0804">Transcription</keyword>
<keyword id="KW-0805">Transcription regulation</keyword>
<proteinExistence type="predicted"/>
<name>Y097_STAAN</name>
<sequence>MQRDYLIRVETESMPDFKRLNGLMIGFVIKGEAHIYDENNMTQCNSGDIFIINHRDLYRFQLQQDGIICYIQFQMKYLADKFDDAHCLYFHLTDATTTKNIHQLRNIMARLVSTHIRHNELSKLTEQQLVIQLLMHMIHYVPRTYHSNQSILNDDKVNQVCDYIELHFHEDLSLSELSEYVGWSESHLSKKFTESLGVGFQHFLNTTRIEHAKLDLTYTDETITDIALQNGFSSAASFARTFKHFTHQTPKQYRGDRPAITENQQSAQHNYHDRELILLLNDYIEEMNHFIEDIEKMNYKEIAFKPTNQQLNQFNHIIQVGYLRNLLNTQYQSQLLTCHHDFQVNEVLAYDVMPYIMKKLNAPFTYDAEISNIFYDIDLCLDFLLDHNFSLTMHLNQYDSRDYIDAFKVFIHHVALHVSHRKDLKFNLYVTTLHTSLIEMIDYFKALFPNGGLYIHLDQATERHLPLLKRLEPHINHFVFDANSNDAVDFNKMNDDEFKTASQMIINKTNYLIDLMHRHNLKRPLILLNWNTLTGDTFITNGEYFRGGIIIEQLLKLSTKVEGIGYWLNYDLHVSHCRNERDYMNSIELFHQYNGKRPVYFTALLFNKLTSNILYSDDTCIVTGTDSNFQILLYDAKHFNPYLALDNQMNMRATEMIHLNINALEDGMYKIKHFTLDKENGALFNLWRKHHTIHGMDKDSIDYVNRMSFPKLEVYDIDITDTLALNIKMITNGIHLIEVKRYPSS</sequence>
<dbReference type="EMBL" id="BA000018">
    <property type="protein sequence ID" value="BAB41316.1"/>
    <property type="molecule type" value="Genomic_DNA"/>
</dbReference>
<dbReference type="PIR" id="A89770">
    <property type="entry name" value="A89770"/>
</dbReference>
<dbReference type="SMR" id="Q7A882"/>
<dbReference type="EnsemblBacteria" id="BAB41316">
    <property type="protein sequence ID" value="BAB41316"/>
    <property type="gene ID" value="BAB41316"/>
</dbReference>
<dbReference type="KEGG" id="sau:SA0097"/>
<dbReference type="HOGENOM" id="CLU_017624_1_0_9"/>
<dbReference type="GO" id="GO:0003700">
    <property type="term" value="F:DNA-binding transcription factor activity"/>
    <property type="evidence" value="ECO:0007669"/>
    <property type="project" value="InterPro"/>
</dbReference>
<dbReference type="GO" id="GO:0043565">
    <property type="term" value="F:sequence-specific DNA binding"/>
    <property type="evidence" value="ECO:0007669"/>
    <property type="project" value="InterPro"/>
</dbReference>
<dbReference type="Gene3D" id="3.20.20.80">
    <property type="entry name" value="Glycosidases"/>
    <property type="match status" value="1"/>
</dbReference>
<dbReference type="Gene3D" id="2.60.40.1500">
    <property type="entry name" value="Glycosyl hydrolase domain, family 39"/>
    <property type="match status" value="1"/>
</dbReference>
<dbReference type="Gene3D" id="1.10.10.60">
    <property type="entry name" value="Homeodomain-like"/>
    <property type="match status" value="2"/>
</dbReference>
<dbReference type="InterPro" id="IPR017853">
    <property type="entry name" value="Glycoside_hydrolase_SF"/>
</dbReference>
<dbReference type="InterPro" id="IPR009057">
    <property type="entry name" value="Homeodomain-like_sf"/>
</dbReference>
<dbReference type="InterPro" id="IPR037923">
    <property type="entry name" value="HTH-like"/>
</dbReference>
<dbReference type="InterPro" id="IPR018060">
    <property type="entry name" value="HTH_AraC"/>
</dbReference>
<dbReference type="InterPro" id="IPR020449">
    <property type="entry name" value="Tscrpt_reg_AraC-type_HTH"/>
</dbReference>
<dbReference type="NCBIfam" id="NF047455">
    <property type="entry name" value="TF_Staph_AryK"/>
    <property type="match status" value="1"/>
</dbReference>
<dbReference type="PANTHER" id="PTHR43280">
    <property type="entry name" value="ARAC-FAMILY TRANSCRIPTIONAL REGULATOR"/>
    <property type="match status" value="1"/>
</dbReference>
<dbReference type="PANTHER" id="PTHR43280:SF28">
    <property type="entry name" value="HTH-TYPE TRANSCRIPTIONAL ACTIVATOR RHAS"/>
    <property type="match status" value="1"/>
</dbReference>
<dbReference type="Pfam" id="PF12833">
    <property type="entry name" value="HTH_18"/>
    <property type="match status" value="1"/>
</dbReference>
<dbReference type="PRINTS" id="PR00032">
    <property type="entry name" value="HTHARAC"/>
</dbReference>
<dbReference type="SMART" id="SM00342">
    <property type="entry name" value="HTH_ARAC"/>
    <property type="match status" value="1"/>
</dbReference>
<dbReference type="SUPFAM" id="SSF51445">
    <property type="entry name" value="(Trans)glycosidases"/>
    <property type="match status" value="1"/>
</dbReference>
<dbReference type="SUPFAM" id="SSF51011">
    <property type="entry name" value="Glycosyl hydrolase domain"/>
    <property type="match status" value="1"/>
</dbReference>
<dbReference type="SUPFAM" id="SSF46689">
    <property type="entry name" value="Homeodomain-like"/>
    <property type="match status" value="2"/>
</dbReference>
<dbReference type="SUPFAM" id="SSF51215">
    <property type="entry name" value="Regulatory protein AraC"/>
    <property type="match status" value="1"/>
</dbReference>
<dbReference type="PROSITE" id="PS01124">
    <property type="entry name" value="HTH_ARAC_FAMILY_2"/>
    <property type="match status" value="1"/>
</dbReference>
<organism>
    <name type="scientific">Staphylococcus aureus (strain N315)</name>
    <dbReference type="NCBI Taxonomy" id="158879"/>
    <lineage>
        <taxon>Bacteria</taxon>
        <taxon>Bacillati</taxon>
        <taxon>Bacillota</taxon>
        <taxon>Bacilli</taxon>
        <taxon>Bacillales</taxon>
        <taxon>Staphylococcaceae</taxon>
        <taxon>Staphylococcus</taxon>
    </lineage>
</organism>
<evidence type="ECO:0000255" key="1">
    <source>
        <dbReference type="PROSITE-ProRule" id="PRU00593"/>
    </source>
</evidence>
<gene>
    <name type="ordered locus">SA0097</name>
</gene>
<reference key="1">
    <citation type="journal article" date="2001" name="Lancet">
        <title>Whole genome sequencing of meticillin-resistant Staphylococcus aureus.</title>
        <authorList>
            <person name="Kuroda M."/>
            <person name="Ohta T."/>
            <person name="Uchiyama I."/>
            <person name="Baba T."/>
            <person name="Yuzawa H."/>
            <person name="Kobayashi I."/>
            <person name="Cui L."/>
            <person name="Oguchi A."/>
            <person name="Aoki K."/>
            <person name="Nagai Y."/>
            <person name="Lian J.-Q."/>
            <person name="Ito T."/>
            <person name="Kanamori M."/>
            <person name="Matsumaru H."/>
            <person name="Maruyama A."/>
            <person name="Murakami H."/>
            <person name="Hosoyama A."/>
            <person name="Mizutani-Ui Y."/>
            <person name="Takahashi N.K."/>
            <person name="Sawano T."/>
            <person name="Inoue R."/>
            <person name="Kaito C."/>
            <person name="Sekimizu K."/>
            <person name="Hirakawa H."/>
            <person name="Kuhara S."/>
            <person name="Goto S."/>
            <person name="Yabuzaki J."/>
            <person name="Kanehisa M."/>
            <person name="Yamashita A."/>
            <person name="Oshima K."/>
            <person name="Furuya K."/>
            <person name="Yoshino C."/>
            <person name="Shiba T."/>
            <person name="Hattori M."/>
            <person name="Ogasawara N."/>
            <person name="Hayashi H."/>
            <person name="Hiramatsu K."/>
        </authorList>
    </citation>
    <scope>NUCLEOTIDE SEQUENCE [LARGE SCALE GENOMIC DNA]</scope>
    <source>
        <strain>N315</strain>
    </source>
</reference>
<protein>
    <recommendedName>
        <fullName>Uncharacterized HTH-type transcriptional regulator SA0097</fullName>
    </recommendedName>
</protein>
<feature type="chain" id="PRO_0000194629" description="Uncharacterized HTH-type transcriptional regulator SA0097">
    <location>
        <begin position="1"/>
        <end position="745"/>
    </location>
</feature>
<feature type="domain" description="HTH araC/xylS-type" evidence="1">
    <location>
        <begin position="158"/>
        <end position="256"/>
    </location>
</feature>
<feature type="DNA-binding region" description="H-T-H motif" evidence="1">
    <location>
        <begin position="175"/>
        <end position="196"/>
    </location>
</feature>
<feature type="DNA-binding region" description="H-T-H motif" evidence="1">
    <location>
        <begin position="223"/>
        <end position="246"/>
    </location>
</feature>